<accession>Q9Z9K4</accession>
<accession>Q9JPX7</accession>
<keyword id="KW-1185">Reference proteome</keyword>
<keyword id="KW-0687">Ribonucleoprotein</keyword>
<keyword id="KW-0689">Ribosomal protein</keyword>
<keyword id="KW-0694">RNA-binding</keyword>
<keyword id="KW-0699">rRNA-binding</keyword>
<organism>
    <name type="scientific">Halalkalibacterium halodurans (strain ATCC BAA-125 / DSM 18197 / FERM 7344 / JCM 9153 / C-125)</name>
    <name type="common">Bacillus halodurans</name>
    <dbReference type="NCBI Taxonomy" id="272558"/>
    <lineage>
        <taxon>Bacteria</taxon>
        <taxon>Bacillati</taxon>
        <taxon>Bacillota</taxon>
        <taxon>Bacilli</taxon>
        <taxon>Bacillales</taxon>
        <taxon>Bacillaceae</taxon>
        <taxon>Halalkalibacterium (ex Joshi et al. 2022)</taxon>
    </lineage>
</organism>
<comment type="function">
    <text evidence="1">Binds to 23S rRNA. Forms part of two intersubunit bridges in the 70S ribosome.</text>
</comment>
<comment type="subunit">
    <text evidence="1">Part of the 50S ribosomal subunit. Forms a cluster with proteins L3 and L19. In the 70S ribosome, L14 and L19 interact and together make contacts with the 16S rRNA in bridges B5 and B8.</text>
</comment>
<comment type="similarity">
    <text evidence="1">Belongs to the universal ribosomal protein uL14 family.</text>
</comment>
<dbReference type="EMBL" id="AB017508">
    <property type="protein sequence ID" value="BAA75281.1"/>
    <property type="molecule type" value="Genomic_DNA"/>
</dbReference>
<dbReference type="EMBL" id="BA000004">
    <property type="protein sequence ID" value="BAB03863.1"/>
    <property type="molecule type" value="Genomic_DNA"/>
</dbReference>
<dbReference type="PIR" id="T44393">
    <property type="entry name" value="T44393"/>
</dbReference>
<dbReference type="RefSeq" id="WP_010896327.1">
    <property type="nucleotide sequence ID" value="NC_002570.2"/>
</dbReference>
<dbReference type="SMR" id="Q9Z9K4"/>
<dbReference type="STRING" id="272558.gene:10725984"/>
<dbReference type="KEGG" id="bha:BH0144"/>
<dbReference type="eggNOG" id="COG0093">
    <property type="taxonomic scope" value="Bacteria"/>
</dbReference>
<dbReference type="HOGENOM" id="CLU_095071_2_1_9"/>
<dbReference type="OrthoDB" id="9806379at2"/>
<dbReference type="Proteomes" id="UP000001258">
    <property type="component" value="Chromosome"/>
</dbReference>
<dbReference type="GO" id="GO:0022625">
    <property type="term" value="C:cytosolic large ribosomal subunit"/>
    <property type="evidence" value="ECO:0007669"/>
    <property type="project" value="TreeGrafter"/>
</dbReference>
<dbReference type="GO" id="GO:0070180">
    <property type="term" value="F:large ribosomal subunit rRNA binding"/>
    <property type="evidence" value="ECO:0007669"/>
    <property type="project" value="TreeGrafter"/>
</dbReference>
<dbReference type="GO" id="GO:0003735">
    <property type="term" value="F:structural constituent of ribosome"/>
    <property type="evidence" value="ECO:0007669"/>
    <property type="project" value="InterPro"/>
</dbReference>
<dbReference type="GO" id="GO:0006412">
    <property type="term" value="P:translation"/>
    <property type="evidence" value="ECO:0007669"/>
    <property type="project" value="UniProtKB-UniRule"/>
</dbReference>
<dbReference type="CDD" id="cd00337">
    <property type="entry name" value="Ribosomal_uL14"/>
    <property type="match status" value="1"/>
</dbReference>
<dbReference type="FunFam" id="2.40.150.20:FF:000001">
    <property type="entry name" value="50S ribosomal protein L14"/>
    <property type="match status" value="1"/>
</dbReference>
<dbReference type="Gene3D" id="2.40.150.20">
    <property type="entry name" value="Ribosomal protein L14"/>
    <property type="match status" value="1"/>
</dbReference>
<dbReference type="HAMAP" id="MF_01367">
    <property type="entry name" value="Ribosomal_uL14"/>
    <property type="match status" value="1"/>
</dbReference>
<dbReference type="InterPro" id="IPR000218">
    <property type="entry name" value="Ribosomal_uL14"/>
</dbReference>
<dbReference type="InterPro" id="IPR005745">
    <property type="entry name" value="Ribosomal_uL14_bac-type"/>
</dbReference>
<dbReference type="InterPro" id="IPR019972">
    <property type="entry name" value="Ribosomal_uL14_CS"/>
</dbReference>
<dbReference type="InterPro" id="IPR036853">
    <property type="entry name" value="Ribosomal_uL14_sf"/>
</dbReference>
<dbReference type="NCBIfam" id="TIGR01067">
    <property type="entry name" value="rplN_bact"/>
    <property type="match status" value="1"/>
</dbReference>
<dbReference type="PANTHER" id="PTHR11761">
    <property type="entry name" value="50S/60S RIBOSOMAL PROTEIN L14/L23"/>
    <property type="match status" value="1"/>
</dbReference>
<dbReference type="PANTHER" id="PTHR11761:SF3">
    <property type="entry name" value="LARGE RIBOSOMAL SUBUNIT PROTEIN UL14M"/>
    <property type="match status" value="1"/>
</dbReference>
<dbReference type="Pfam" id="PF00238">
    <property type="entry name" value="Ribosomal_L14"/>
    <property type="match status" value="1"/>
</dbReference>
<dbReference type="SMART" id="SM01374">
    <property type="entry name" value="Ribosomal_L14"/>
    <property type="match status" value="1"/>
</dbReference>
<dbReference type="SUPFAM" id="SSF50193">
    <property type="entry name" value="Ribosomal protein L14"/>
    <property type="match status" value="1"/>
</dbReference>
<dbReference type="PROSITE" id="PS00049">
    <property type="entry name" value="RIBOSOMAL_L14"/>
    <property type="match status" value="1"/>
</dbReference>
<reference key="1">
    <citation type="journal article" date="1999" name="Biosci. Biotechnol. Biochem.">
        <title>Sequence analysis of a 32-kb region including the major ribosomal protein gene clusters from alkaliphilic Bacillus sp. strain C-125.</title>
        <authorList>
            <person name="Takami H."/>
            <person name="Takaki Y."/>
            <person name="Nakasone K."/>
            <person name="Hirama C."/>
            <person name="Inoue A."/>
            <person name="Horikoshi K."/>
        </authorList>
    </citation>
    <scope>NUCLEOTIDE SEQUENCE [GENOMIC DNA]</scope>
    <source>
        <strain>ATCC BAA-125 / DSM 18197 / FERM 7344 / JCM 9153 / C-125</strain>
    </source>
</reference>
<reference key="2">
    <citation type="journal article" date="2000" name="Nucleic Acids Res.">
        <title>Complete genome sequence of the alkaliphilic bacterium Bacillus halodurans and genomic sequence comparison with Bacillus subtilis.</title>
        <authorList>
            <person name="Takami H."/>
            <person name="Nakasone K."/>
            <person name="Takaki Y."/>
            <person name="Maeno G."/>
            <person name="Sasaki R."/>
            <person name="Masui N."/>
            <person name="Fuji F."/>
            <person name="Hirama C."/>
            <person name="Nakamura Y."/>
            <person name="Ogasawara N."/>
            <person name="Kuhara S."/>
            <person name="Horikoshi K."/>
        </authorList>
    </citation>
    <scope>NUCLEOTIDE SEQUENCE [LARGE SCALE GENOMIC DNA]</scope>
    <source>
        <strain>ATCC BAA-125 / DSM 18197 / FERM 7344 / JCM 9153 / C-125</strain>
    </source>
</reference>
<name>RL14_HALH5</name>
<proteinExistence type="inferred from homology"/>
<feature type="chain" id="PRO_0000128528" description="Large ribosomal subunit protein uL14">
    <location>
        <begin position="1"/>
        <end position="122"/>
    </location>
</feature>
<sequence length="122" mass="13164">MIQQESRLKVADNSGARELLCIKVLGGSGRKTANIGDVIVCSVKQATPGGVVKKGDVVKAVIVRSKSGVRRNDGSYIKFDENAAVIVRDDKSPRGTRIFGPVARELRDNQFMKIVSLAPEVL</sequence>
<gene>
    <name evidence="1" type="primary">rplN</name>
    <name type="ordered locus">BH0144</name>
</gene>
<protein>
    <recommendedName>
        <fullName evidence="1">Large ribosomal subunit protein uL14</fullName>
    </recommendedName>
    <alternativeName>
        <fullName evidence="2">50S ribosomal protein L14</fullName>
    </alternativeName>
</protein>
<evidence type="ECO:0000255" key="1">
    <source>
        <dbReference type="HAMAP-Rule" id="MF_01367"/>
    </source>
</evidence>
<evidence type="ECO:0000305" key="2"/>